<name>THIE_MYCUA</name>
<comment type="function">
    <text evidence="1">Condenses 4-methyl-5-(beta-hydroxyethyl)thiazole monophosphate (THZ-P) and 2-methyl-4-amino-5-hydroxymethyl pyrimidine pyrophosphate (HMP-PP) to form thiamine monophosphate (TMP).</text>
</comment>
<comment type="catalytic activity">
    <reaction evidence="1">
        <text>2-[(2R,5Z)-2-carboxy-4-methylthiazol-5(2H)-ylidene]ethyl phosphate + 4-amino-2-methyl-5-(diphosphooxymethyl)pyrimidine + 2 H(+) = thiamine phosphate + CO2 + diphosphate</text>
        <dbReference type="Rhea" id="RHEA:47844"/>
        <dbReference type="ChEBI" id="CHEBI:15378"/>
        <dbReference type="ChEBI" id="CHEBI:16526"/>
        <dbReference type="ChEBI" id="CHEBI:33019"/>
        <dbReference type="ChEBI" id="CHEBI:37575"/>
        <dbReference type="ChEBI" id="CHEBI:57841"/>
        <dbReference type="ChEBI" id="CHEBI:62899"/>
        <dbReference type="EC" id="2.5.1.3"/>
    </reaction>
</comment>
<comment type="catalytic activity">
    <reaction evidence="1">
        <text>2-(2-carboxy-4-methylthiazol-5-yl)ethyl phosphate + 4-amino-2-methyl-5-(diphosphooxymethyl)pyrimidine + 2 H(+) = thiamine phosphate + CO2 + diphosphate</text>
        <dbReference type="Rhea" id="RHEA:47848"/>
        <dbReference type="ChEBI" id="CHEBI:15378"/>
        <dbReference type="ChEBI" id="CHEBI:16526"/>
        <dbReference type="ChEBI" id="CHEBI:33019"/>
        <dbReference type="ChEBI" id="CHEBI:37575"/>
        <dbReference type="ChEBI" id="CHEBI:57841"/>
        <dbReference type="ChEBI" id="CHEBI:62890"/>
        <dbReference type="EC" id="2.5.1.3"/>
    </reaction>
</comment>
<comment type="catalytic activity">
    <reaction evidence="1">
        <text>4-methyl-5-(2-phosphooxyethyl)-thiazole + 4-amino-2-methyl-5-(diphosphooxymethyl)pyrimidine + H(+) = thiamine phosphate + diphosphate</text>
        <dbReference type="Rhea" id="RHEA:22328"/>
        <dbReference type="ChEBI" id="CHEBI:15378"/>
        <dbReference type="ChEBI" id="CHEBI:33019"/>
        <dbReference type="ChEBI" id="CHEBI:37575"/>
        <dbReference type="ChEBI" id="CHEBI:57841"/>
        <dbReference type="ChEBI" id="CHEBI:58296"/>
        <dbReference type="EC" id="2.5.1.3"/>
    </reaction>
</comment>
<comment type="cofactor">
    <cofactor evidence="1">
        <name>Mg(2+)</name>
        <dbReference type="ChEBI" id="CHEBI:18420"/>
    </cofactor>
    <text evidence="1">Binds 1 Mg(2+) ion per subunit.</text>
</comment>
<comment type="pathway">
    <text evidence="1">Cofactor biosynthesis; thiamine diphosphate biosynthesis; thiamine phosphate from 4-amino-2-methyl-5-diphosphomethylpyrimidine and 4-methyl-5-(2-phosphoethyl)-thiazole: step 1/1.</text>
</comment>
<comment type="similarity">
    <text evidence="1">Belongs to the thiamine-phosphate synthase family.</text>
</comment>
<evidence type="ECO:0000255" key="1">
    <source>
        <dbReference type="HAMAP-Rule" id="MF_00097"/>
    </source>
</evidence>
<feature type="chain" id="PRO_0000336412" description="Thiamine-phosphate synthase">
    <location>
        <begin position="1"/>
        <end position="220"/>
    </location>
</feature>
<feature type="binding site" evidence="1">
    <location>
        <begin position="39"/>
        <end position="43"/>
    </location>
    <ligand>
        <name>4-amino-2-methyl-5-(diphosphooxymethyl)pyrimidine</name>
        <dbReference type="ChEBI" id="CHEBI:57841"/>
    </ligand>
</feature>
<feature type="binding site" evidence="1">
    <location>
        <position position="80"/>
    </location>
    <ligand>
        <name>4-amino-2-methyl-5-(diphosphooxymethyl)pyrimidine</name>
        <dbReference type="ChEBI" id="CHEBI:57841"/>
    </ligand>
</feature>
<feature type="binding site" evidence="1">
    <location>
        <position position="81"/>
    </location>
    <ligand>
        <name>Mg(2+)</name>
        <dbReference type="ChEBI" id="CHEBI:18420"/>
    </ligand>
</feature>
<feature type="binding site" evidence="1">
    <location>
        <position position="100"/>
    </location>
    <ligand>
        <name>Mg(2+)</name>
        <dbReference type="ChEBI" id="CHEBI:18420"/>
    </ligand>
</feature>
<feature type="binding site" evidence="1">
    <location>
        <position position="119"/>
    </location>
    <ligand>
        <name>4-amino-2-methyl-5-(diphosphooxymethyl)pyrimidine</name>
        <dbReference type="ChEBI" id="CHEBI:57841"/>
    </ligand>
</feature>
<feature type="binding site" evidence="1">
    <location>
        <begin position="145"/>
        <end position="147"/>
    </location>
    <ligand>
        <name>2-[(2R,5Z)-2-carboxy-4-methylthiazol-5(2H)-ylidene]ethyl phosphate</name>
        <dbReference type="ChEBI" id="CHEBI:62899"/>
    </ligand>
</feature>
<feature type="binding site" evidence="1">
    <location>
        <position position="148"/>
    </location>
    <ligand>
        <name>4-amino-2-methyl-5-(diphosphooxymethyl)pyrimidine</name>
        <dbReference type="ChEBI" id="CHEBI:57841"/>
    </ligand>
</feature>
<feature type="binding site" evidence="1">
    <location>
        <position position="176"/>
    </location>
    <ligand>
        <name>2-[(2R,5Z)-2-carboxy-4-methylthiazol-5(2H)-ylidene]ethyl phosphate</name>
        <dbReference type="ChEBI" id="CHEBI:62899"/>
    </ligand>
</feature>
<sequence length="220" mass="23079">MHSRLATARLYLCTDARRERGDLADFADAALAGGVDIIQLRDKGSAGEQRFGPLEARDELAACEILADAAARHAAMFAVNDRADIARAARADVLHLGQRDLPVDVARAITGPATLIGQSTHDRDQVSAAAIGAVDYFCVGPCWPTPTKPGRTAPGLDLVRFAADVAGAKPWFAIGGIDGLRLPEVLAAGARRIVVVRAITAADDPREAAAKLKSELLAAI</sequence>
<accession>A0PRY2</accession>
<protein>
    <recommendedName>
        <fullName evidence="1">Thiamine-phosphate synthase</fullName>
        <shortName evidence="1">TP synthase</shortName>
        <shortName evidence="1">TPS</shortName>
        <ecNumber evidence="1">2.5.1.3</ecNumber>
    </recommendedName>
    <alternativeName>
        <fullName evidence="1">Thiamine-phosphate pyrophosphorylase</fullName>
        <shortName evidence="1">TMP pyrophosphorylase</shortName>
        <shortName evidence="1">TMP-PPase</shortName>
    </alternativeName>
</protein>
<gene>
    <name evidence="1" type="primary">thiE</name>
    <name type="ordered locus">MUL_2806</name>
</gene>
<dbReference type="EC" id="2.5.1.3" evidence="1"/>
<dbReference type="EMBL" id="CP000325">
    <property type="protein sequence ID" value="ABL05101.1"/>
    <property type="molecule type" value="Genomic_DNA"/>
</dbReference>
<dbReference type="RefSeq" id="WP_011740715.1">
    <property type="nucleotide sequence ID" value="NC_008611.1"/>
</dbReference>
<dbReference type="SMR" id="A0PRY2"/>
<dbReference type="KEGG" id="mul:MUL_2806"/>
<dbReference type="eggNOG" id="COG0352">
    <property type="taxonomic scope" value="Bacteria"/>
</dbReference>
<dbReference type="HOGENOM" id="CLU_018272_3_0_11"/>
<dbReference type="UniPathway" id="UPA00060">
    <property type="reaction ID" value="UER00141"/>
</dbReference>
<dbReference type="Proteomes" id="UP000000765">
    <property type="component" value="Chromosome"/>
</dbReference>
<dbReference type="GO" id="GO:0005737">
    <property type="term" value="C:cytoplasm"/>
    <property type="evidence" value="ECO:0007669"/>
    <property type="project" value="TreeGrafter"/>
</dbReference>
<dbReference type="GO" id="GO:0000287">
    <property type="term" value="F:magnesium ion binding"/>
    <property type="evidence" value="ECO:0007669"/>
    <property type="project" value="UniProtKB-UniRule"/>
</dbReference>
<dbReference type="GO" id="GO:0004789">
    <property type="term" value="F:thiamine-phosphate diphosphorylase activity"/>
    <property type="evidence" value="ECO:0007669"/>
    <property type="project" value="UniProtKB-UniRule"/>
</dbReference>
<dbReference type="GO" id="GO:0009228">
    <property type="term" value="P:thiamine biosynthetic process"/>
    <property type="evidence" value="ECO:0007669"/>
    <property type="project" value="UniProtKB-KW"/>
</dbReference>
<dbReference type="GO" id="GO:0009229">
    <property type="term" value="P:thiamine diphosphate biosynthetic process"/>
    <property type="evidence" value="ECO:0007669"/>
    <property type="project" value="UniProtKB-UniRule"/>
</dbReference>
<dbReference type="CDD" id="cd00564">
    <property type="entry name" value="TMP_TenI"/>
    <property type="match status" value="1"/>
</dbReference>
<dbReference type="FunFam" id="3.20.20.70:FF:000178">
    <property type="entry name" value="Thiamine-phosphate synthase"/>
    <property type="match status" value="1"/>
</dbReference>
<dbReference type="Gene3D" id="3.20.20.70">
    <property type="entry name" value="Aldolase class I"/>
    <property type="match status" value="1"/>
</dbReference>
<dbReference type="HAMAP" id="MF_00097">
    <property type="entry name" value="TMP_synthase"/>
    <property type="match status" value="1"/>
</dbReference>
<dbReference type="InterPro" id="IPR013785">
    <property type="entry name" value="Aldolase_TIM"/>
</dbReference>
<dbReference type="InterPro" id="IPR036206">
    <property type="entry name" value="ThiamineP_synth_sf"/>
</dbReference>
<dbReference type="InterPro" id="IPR022998">
    <property type="entry name" value="ThiamineP_synth_TenI"/>
</dbReference>
<dbReference type="InterPro" id="IPR034291">
    <property type="entry name" value="TMP_synthase"/>
</dbReference>
<dbReference type="NCBIfam" id="TIGR00693">
    <property type="entry name" value="thiE"/>
    <property type="match status" value="1"/>
</dbReference>
<dbReference type="PANTHER" id="PTHR20857">
    <property type="entry name" value="THIAMINE-PHOSPHATE PYROPHOSPHORYLASE"/>
    <property type="match status" value="1"/>
</dbReference>
<dbReference type="PANTHER" id="PTHR20857:SF15">
    <property type="entry name" value="THIAMINE-PHOSPHATE SYNTHASE"/>
    <property type="match status" value="1"/>
</dbReference>
<dbReference type="Pfam" id="PF02581">
    <property type="entry name" value="TMP-TENI"/>
    <property type="match status" value="1"/>
</dbReference>
<dbReference type="SUPFAM" id="SSF51391">
    <property type="entry name" value="Thiamin phosphate synthase"/>
    <property type="match status" value="1"/>
</dbReference>
<keyword id="KW-0460">Magnesium</keyword>
<keyword id="KW-0479">Metal-binding</keyword>
<keyword id="KW-0784">Thiamine biosynthesis</keyword>
<keyword id="KW-0808">Transferase</keyword>
<proteinExistence type="inferred from homology"/>
<organism>
    <name type="scientific">Mycobacterium ulcerans (strain Agy99)</name>
    <dbReference type="NCBI Taxonomy" id="362242"/>
    <lineage>
        <taxon>Bacteria</taxon>
        <taxon>Bacillati</taxon>
        <taxon>Actinomycetota</taxon>
        <taxon>Actinomycetes</taxon>
        <taxon>Mycobacteriales</taxon>
        <taxon>Mycobacteriaceae</taxon>
        <taxon>Mycobacterium</taxon>
        <taxon>Mycobacterium ulcerans group</taxon>
    </lineage>
</organism>
<reference key="1">
    <citation type="journal article" date="2007" name="Genome Res.">
        <title>Reductive evolution and niche adaptation inferred from the genome of Mycobacterium ulcerans, the causative agent of Buruli ulcer.</title>
        <authorList>
            <person name="Stinear T.P."/>
            <person name="Seemann T."/>
            <person name="Pidot S."/>
            <person name="Frigui W."/>
            <person name="Reysset G."/>
            <person name="Garnier T."/>
            <person name="Meurice G."/>
            <person name="Simon D."/>
            <person name="Bouchier C."/>
            <person name="Ma L."/>
            <person name="Tichit M."/>
            <person name="Porter J.L."/>
            <person name="Ryan J."/>
            <person name="Johnson P.D.R."/>
            <person name="Davies J.K."/>
            <person name="Jenkin G.A."/>
            <person name="Small P.L.C."/>
            <person name="Jones L.M."/>
            <person name="Tekaia F."/>
            <person name="Laval F."/>
            <person name="Daffe M."/>
            <person name="Parkhill J."/>
            <person name="Cole S.T."/>
        </authorList>
    </citation>
    <scope>NUCLEOTIDE SEQUENCE [LARGE SCALE GENOMIC DNA]</scope>
    <source>
        <strain>Agy99</strain>
    </source>
</reference>